<evidence type="ECO:0000250" key="1">
    <source>
        <dbReference type="UniProtKB" id="Q9H867"/>
    </source>
</evidence>
<evidence type="ECO:0000269" key="2">
    <source>
    </source>
</evidence>
<evidence type="ECO:0000269" key="3">
    <source>
    </source>
</evidence>
<evidence type="ECO:0000269" key="4">
    <source>
    </source>
</evidence>
<evidence type="ECO:0000269" key="5">
    <source>
    </source>
</evidence>
<evidence type="ECO:0000269" key="6">
    <source>
    </source>
</evidence>
<evidence type="ECO:0000303" key="7">
    <source>
    </source>
</evidence>
<evidence type="ECO:0000305" key="8"/>
<evidence type="ECO:0000305" key="9">
    <source>
    </source>
</evidence>
<evidence type="ECO:0000312" key="10">
    <source>
        <dbReference type="SGD" id="S000003890"/>
    </source>
</evidence>
<evidence type="ECO:0007744" key="11">
    <source>
    </source>
</evidence>
<reference key="1">
    <citation type="journal article" date="1996" name="EMBO J.">
        <title>Complete nucleotide sequence of Saccharomyces cerevisiae chromosome X.</title>
        <authorList>
            <person name="Galibert F."/>
            <person name="Alexandraki D."/>
            <person name="Baur A."/>
            <person name="Boles E."/>
            <person name="Chalwatzis N."/>
            <person name="Chuat J.-C."/>
            <person name="Coster F."/>
            <person name="Cziepluch C."/>
            <person name="de Haan M."/>
            <person name="Domdey H."/>
            <person name="Durand P."/>
            <person name="Entian K.-D."/>
            <person name="Gatius M."/>
            <person name="Goffeau A."/>
            <person name="Grivell L.A."/>
            <person name="Hennemann A."/>
            <person name="Herbert C.J."/>
            <person name="Heumann K."/>
            <person name="Hilger F."/>
            <person name="Hollenberg C.P."/>
            <person name="Huang M.-E."/>
            <person name="Jacq C."/>
            <person name="Jauniaux J.-C."/>
            <person name="Katsoulou C."/>
            <person name="Kirchrath L."/>
            <person name="Kleine K."/>
            <person name="Kordes E."/>
            <person name="Koetter P."/>
            <person name="Liebl S."/>
            <person name="Louis E.J."/>
            <person name="Manus V."/>
            <person name="Mewes H.-W."/>
            <person name="Miosga T."/>
            <person name="Obermaier B."/>
            <person name="Perea J."/>
            <person name="Pohl T.M."/>
            <person name="Portetelle D."/>
            <person name="Pujol A."/>
            <person name="Purnelle B."/>
            <person name="Ramezani Rad M."/>
            <person name="Rasmussen S.W."/>
            <person name="Rose M."/>
            <person name="Rossau R."/>
            <person name="Schaaff-Gerstenschlaeger I."/>
            <person name="Smits P.H.M."/>
            <person name="Scarcez T."/>
            <person name="Soriano N."/>
            <person name="To Van D."/>
            <person name="Tzermia M."/>
            <person name="Van Broekhoven A."/>
            <person name="Vandenbol M."/>
            <person name="Wedler H."/>
            <person name="von Wettstein D."/>
            <person name="Wambutt R."/>
            <person name="Zagulski M."/>
            <person name="Zollner A."/>
            <person name="Karpfinger-Hartl L."/>
        </authorList>
    </citation>
    <scope>NUCLEOTIDE SEQUENCE [LARGE SCALE GENOMIC DNA]</scope>
    <source>
        <strain>ATCC 204508 / S288c</strain>
    </source>
</reference>
<reference key="2">
    <citation type="journal article" date="2014" name="G3 (Bethesda)">
        <title>The reference genome sequence of Saccharomyces cerevisiae: Then and now.</title>
        <authorList>
            <person name="Engel S.R."/>
            <person name="Dietrich F.S."/>
            <person name="Fisk D.G."/>
            <person name="Binkley G."/>
            <person name="Balakrishnan R."/>
            <person name="Costanzo M.C."/>
            <person name="Dwight S.S."/>
            <person name="Hitz B.C."/>
            <person name="Karra K."/>
            <person name="Nash R.S."/>
            <person name="Weng S."/>
            <person name="Wong E.D."/>
            <person name="Lloyd P."/>
            <person name="Skrzypek M.S."/>
            <person name="Miyasato S.R."/>
            <person name="Simison M."/>
            <person name="Cherry J.M."/>
        </authorList>
    </citation>
    <scope>GENOME REANNOTATION</scope>
    <scope>SEQUENCE REVISION TO 118</scope>
    <source>
        <strain>ATCC 204508 / S288c</strain>
    </source>
</reference>
<reference key="3">
    <citation type="journal article" date="2003" name="Nature">
        <title>Global analysis of protein localization in budding yeast.</title>
        <authorList>
            <person name="Huh W.-K."/>
            <person name="Falvo J.V."/>
            <person name="Gerke L.C."/>
            <person name="Carroll A.S."/>
            <person name="Howson R.W."/>
            <person name="Weissman J.S."/>
            <person name="O'Shea E.K."/>
        </authorList>
    </citation>
    <scope>SUBCELLULAR LOCATION [LARGE SCALE ANALYSIS]</scope>
</reference>
<reference key="4">
    <citation type="journal article" date="2003" name="Nature">
        <title>Global analysis of protein expression in yeast.</title>
        <authorList>
            <person name="Ghaemmaghami S."/>
            <person name="Huh W.-K."/>
            <person name="Bower K."/>
            <person name="Howson R.W."/>
            <person name="Belle A."/>
            <person name="Dephoure N."/>
            <person name="O'Shea E.K."/>
            <person name="Weissman J.S."/>
        </authorList>
    </citation>
    <scope>LEVEL OF PROTEIN EXPRESSION [LARGE SCALE ANALYSIS]</scope>
</reference>
<reference key="5">
    <citation type="journal article" date="2008" name="Mol. Cell. Proteomics">
        <title>A multidimensional chromatography technology for in-depth phosphoproteome analysis.</title>
        <authorList>
            <person name="Albuquerque C.P."/>
            <person name="Smolka M.B."/>
            <person name="Payne S.H."/>
            <person name="Bafna V."/>
            <person name="Eng J."/>
            <person name="Zhou H."/>
        </authorList>
    </citation>
    <scope>PHOSPHORYLATION [LARGE SCALE ANALYSIS] AT THR-177</scope>
    <scope>IDENTIFICATION BY MASS SPECTROMETRY [LARGE SCALE ANALYSIS]</scope>
</reference>
<reference key="6">
    <citation type="journal article" date="2012" name="Proc. Natl. Acad. Sci. U.S.A.">
        <title>N-terminal acetylome analyses and functional insights of the N-terminal acetyltransferase NatB.</title>
        <authorList>
            <person name="Van Damme P."/>
            <person name="Lasa M."/>
            <person name="Polevoda B."/>
            <person name="Gazquez C."/>
            <person name="Elosegui-Artola A."/>
            <person name="Kim D.S."/>
            <person name="De Juan-Pardo E."/>
            <person name="Demeyer K."/>
            <person name="Hole K."/>
            <person name="Larrea E."/>
            <person name="Timmerman E."/>
            <person name="Prieto J."/>
            <person name="Arnesen T."/>
            <person name="Sherman F."/>
            <person name="Gevaert K."/>
            <person name="Aldabe R."/>
        </authorList>
    </citation>
    <scope>IDENTIFICATION BY MASS SPECTROMETRY [LARGE SCALE ANALYSIS]</scope>
</reference>
<reference key="7">
    <citation type="journal article" date="2014" name="Biochem. Biophys. Res. Commun.">
        <title>Elongation factor methyltransferase 3 - A novel eukaryotic lysine methyltransferase.</title>
        <authorList>
            <person name="Zhang L."/>
            <person name="Hamey J.J."/>
            <person name="Hart-Smith G."/>
            <person name="Erce M.A."/>
            <person name="Wilkins M.R."/>
        </authorList>
    </citation>
    <scope>FUNCTION</scope>
    <scope>CATALYTIC ACTIVITY</scope>
</reference>
<reference key="8">
    <citation type="journal article" date="2014" name="J. Biol. Chem.">
        <title>Identification and characterization of a novel evolutionarily conserved lysine-specific methyltransferase targeting eukaryotic translation elongation factor 2 (eEF2).</title>
        <authorList>
            <person name="Davydova E."/>
            <person name="Ho A.Y."/>
            <person name="Malecki J."/>
            <person name="Moen A."/>
            <person name="Enserink J.M."/>
            <person name="Jakobsson M.E."/>
            <person name="Loenarz C."/>
            <person name="Falnes P.O."/>
        </authorList>
    </citation>
    <scope>FUNCTION</scope>
    <scope>CATALYTIC ACTIVITY</scope>
</reference>
<reference key="9">
    <citation type="journal article" date="2014" name="J. Biol. Chem.">
        <title>Translational roles of elongation factor 2 protein lysine methylation.</title>
        <authorList>
            <person name="Dzialo M.C."/>
            <person name="Travaglini K.J."/>
            <person name="Shen S."/>
            <person name="Roy K."/>
            <person name="Chanfreau G.F."/>
            <person name="Loo J.A."/>
            <person name="Clarke S.G."/>
        </authorList>
    </citation>
    <scope>FUNCTION</scope>
    <scope>DISRUPTION PHENOTYPE</scope>
</reference>
<organism>
    <name type="scientific">Saccharomyces cerevisiae (strain ATCC 204508 / S288c)</name>
    <name type="common">Baker's yeast</name>
    <dbReference type="NCBI Taxonomy" id="559292"/>
    <lineage>
        <taxon>Eukaryota</taxon>
        <taxon>Fungi</taxon>
        <taxon>Dikarya</taxon>
        <taxon>Ascomycota</taxon>
        <taxon>Saccharomycotina</taxon>
        <taxon>Saccharomycetes</taxon>
        <taxon>Saccharomycetales</taxon>
        <taxon>Saccharomycetaceae</taxon>
        <taxon>Saccharomyces</taxon>
    </lineage>
</organism>
<dbReference type="EC" id="2.1.1.-" evidence="4 5"/>
<dbReference type="EMBL" id="Z49629">
    <property type="protein sequence ID" value="CAA89660.1"/>
    <property type="molecule type" value="Genomic_DNA"/>
</dbReference>
<dbReference type="EMBL" id="BK006943">
    <property type="protein sequence ID" value="DAA08913.2"/>
    <property type="molecule type" value="Genomic_DNA"/>
</dbReference>
<dbReference type="PIR" id="S57152">
    <property type="entry name" value="S57152"/>
</dbReference>
<dbReference type="RefSeq" id="NP_012663.2">
    <property type="nucleotide sequence ID" value="NM_001181787.2"/>
</dbReference>
<dbReference type="SMR" id="P47163"/>
<dbReference type="BioGRID" id="33884">
    <property type="interactions" value="40"/>
</dbReference>
<dbReference type="FunCoup" id="P47163">
    <property type="interactions" value="616"/>
</dbReference>
<dbReference type="IntAct" id="P47163">
    <property type="interactions" value="1"/>
</dbReference>
<dbReference type="STRING" id="4932.YJR129C"/>
<dbReference type="iPTMnet" id="P47163"/>
<dbReference type="PaxDb" id="4932-YJR129C"/>
<dbReference type="PeptideAtlas" id="P47163"/>
<dbReference type="EnsemblFungi" id="YJR129C_mRNA">
    <property type="protein sequence ID" value="YJR129C"/>
    <property type="gene ID" value="YJR129C"/>
</dbReference>
<dbReference type="GeneID" id="853593"/>
<dbReference type="KEGG" id="sce:YJR129C"/>
<dbReference type="AGR" id="SGD:S000003890"/>
<dbReference type="SGD" id="S000003890">
    <property type="gene designation" value="EFM3"/>
</dbReference>
<dbReference type="VEuPathDB" id="FungiDB:YJR129C"/>
<dbReference type="eggNOG" id="KOG2497">
    <property type="taxonomic scope" value="Eukaryota"/>
</dbReference>
<dbReference type="GeneTree" id="ENSGT00940000164788"/>
<dbReference type="HOGENOM" id="CLU_038942_1_1_1"/>
<dbReference type="InParanoid" id="P47163"/>
<dbReference type="OMA" id="MYVTDGD"/>
<dbReference type="OrthoDB" id="194386at2759"/>
<dbReference type="BioCyc" id="YEAST:G3O-31749-MONOMER"/>
<dbReference type="Reactome" id="R-SCE-8876725">
    <property type="pathway name" value="Protein methylation"/>
</dbReference>
<dbReference type="BioGRID-ORCS" id="853593">
    <property type="hits" value="0 hits in 10 CRISPR screens"/>
</dbReference>
<dbReference type="PRO" id="PR:P47163"/>
<dbReference type="Proteomes" id="UP000002311">
    <property type="component" value="Chromosome X"/>
</dbReference>
<dbReference type="RNAct" id="P47163">
    <property type="molecule type" value="protein"/>
</dbReference>
<dbReference type="GO" id="GO:0005737">
    <property type="term" value="C:cytoplasm"/>
    <property type="evidence" value="ECO:0007005"/>
    <property type="project" value="SGD"/>
</dbReference>
<dbReference type="GO" id="GO:0016279">
    <property type="term" value="F:protein-lysine N-methyltransferase activity"/>
    <property type="evidence" value="ECO:0000314"/>
    <property type="project" value="UniProtKB"/>
</dbReference>
<dbReference type="GO" id="GO:0018023">
    <property type="term" value="P:peptidyl-lysine trimethylation"/>
    <property type="evidence" value="ECO:0000314"/>
    <property type="project" value="UniProtKB"/>
</dbReference>
<dbReference type="Gene3D" id="3.40.50.150">
    <property type="entry name" value="Vaccinia Virus protein VP39"/>
    <property type="match status" value="1"/>
</dbReference>
<dbReference type="InterPro" id="IPR019410">
    <property type="entry name" value="Methyltransf_16"/>
</dbReference>
<dbReference type="InterPro" id="IPR029063">
    <property type="entry name" value="SAM-dependent_MTases_sf"/>
</dbReference>
<dbReference type="PANTHER" id="PTHR14614">
    <property type="entry name" value="HEPATOCELLULAR CARCINOMA-ASSOCIATED ANTIGEN"/>
    <property type="match status" value="1"/>
</dbReference>
<dbReference type="PANTHER" id="PTHR14614:SF130">
    <property type="entry name" value="PROTEIN-LYSINE N-METHYLTRANSFERASE EEF2KMT"/>
    <property type="match status" value="1"/>
</dbReference>
<dbReference type="Pfam" id="PF10294">
    <property type="entry name" value="Methyltransf_16"/>
    <property type="match status" value="1"/>
</dbReference>
<dbReference type="SUPFAM" id="SSF53335">
    <property type="entry name" value="S-adenosyl-L-methionine-dependent methyltransferases"/>
    <property type="match status" value="1"/>
</dbReference>
<accession>P47163</accession>
<accession>D6VWU7</accession>
<name>EFM3_YEAST</name>
<gene>
    <name evidence="7" type="primary">EFM3</name>
    <name evidence="10" type="ordered locus">YJR129C</name>
    <name type="ORF">J2061</name>
</gene>
<proteinExistence type="evidence at protein level"/>
<comment type="function">
    <text evidence="4 5">S-adenosyl-L-methionine-dependent protein-lysine N-methyltransferase that mono-, di- and trimethylates elongation factor 2 (EFT1/EFT2) at 'Lys-509'.</text>
</comment>
<comment type="subcellular location">
    <subcellularLocation>
        <location evidence="2">Cytoplasm</location>
    </subcellularLocation>
</comment>
<comment type="disruption phenotype">
    <text evidence="6">Increases sensitivity to antibiotics that target translation and decreases translational fidelity.</text>
</comment>
<comment type="miscellaneous">
    <text evidence="3">Present with 1550 molecules/cell in log phase SD medium.</text>
</comment>
<comment type="similarity">
    <text evidence="8">Belongs to the class I-like SAM-binding methyltransferase superfamily. EEF2KMT family.</text>
</comment>
<keyword id="KW-0963">Cytoplasm</keyword>
<keyword id="KW-0489">Methyltransferase</keyword>
<keyword id="KW-0597">Phosphoprotein</keyword>
<keyword id="KW-1185">Reference proteome</keyword>
<keyword id="KW-0949">S-adenosyl-L-methionine</keyword>
<keyword id="KW-0808">Transferase</keyword>
<sequence>MNEDLFYDRLHQRCPGKYLLEELETSKSNDVLHASRFVCEMELVQKTNAYYCKTIVKMLLDHEWIFAKAFTIVNDGEDEIEIYDYLYEKYIKLLSTGKPDPMMKDVVRYRFDEDVKIKIEETPNLISAASTTGFRTWEAALYMGDFLIHKPLQELAPVQGQDDGKKKLNVLEVGAGTGIVSLVILQKYHEFVNKMYVTDGDSNLVETQLKRNFELNNEVRENEPDIKLQRLWWGSDRVPEDIDLVVGADVTYDPTILPDLCECLAECLALDRCKLCLLSATIRSESTVQLFSQECNKLGLKCTIVTSTEYDANNEIRAMKALQFKPLIAPIRIYKITKQ</sequence>
<feature type="chain" id="PRO_0000203120" description="Protein-lysine N-methyltransferase EFM3">
    <location>
        <begin position="1"/>
        <end position="339"/>
    </location>
</feature>
<feature type="binding site" evidence="1">
    <location>
        <position position="137"/>
    </location>
    <ligand>
        <name>S-adenosyl-L-methionine</name>
        <dbReference type="ChEBI" id="CHEBI:59789"/>
    </ligand>
</feature>
<feature type="binding site" evidence="1">
    <location>
        <begin position="174"/>
        <end position="176"/>
    </location>
    <ligand>
        <name>S-adenosyl-L-methionine</name>
        <dbReference type="ChEBI" id="CHEBI:59789"/>
    </ligand>
</feature>
<feature type="binding site" evidence="1">
    <location>
        <position position="199"/>
    </location>
    <ligand>
        <name>S-adenosyl-L-methionine</name>
        <dbReference type="ChEBI" id="CHEBI:59789"/>
    </ligand>
</feature>
<feature type="binding site" evidence="1">
    <location>
        <position position="233"/>
    </location>
    <ligand>
        <name>S-adenosyl-L-methionine</name>
        <dbReference type="ChEBI" id="CHEBI:59789"/>
    </ligand>
</feature>
<feature type="binding site" evidence="1">
    <location>
        <position position="248"/>
    </location>
    <ligand>
        <name>S-adenosyl-L-methionine</name>
        <dbReference type="ChEBI" id="CHEBI:59789"/>
    </ligand>
</feature>
<feature type="modified residue" description="Phosphothreonine" evidence="11">
    <location>
        <position position="177"/>
    </location>
</feature>
<feature type="sequence conflict" description="In Ref. 1; CAA89660." evidence="8" ref="1">
    <original>K</original>
    <variation>T</variation>
    <location>
        <position position="118"/>
    </location>
</feature>
<protein>
    <recommendedName>
        <fullName evidence="9">Protein-lysine N-methyltransferase EFM3</fullName>
        <ecNumber evidence="4 5">2.1.1.-</ecNumber>
    </recommendedName>
    <alternativeName>
        <fullName evidence="7">Elongation factor methyltransferase 3</fullName>
    </alternativeName>
</protein>